<gene>
    <name evidence="1" type="primary">gph</name>
    <name type="synonym">cbbZ</name>
    <name type="ordered locus">XCC2268</name>
</gene>
<reference key="1">
    <citation type="journal article" date="2002" name="Nature">
        <title>Comparison of the genomes of two Xanthomonas pathogens with differing host specificities.</title>
        <authorList>
            <person name="da Silva A.C.R."/>
            <person name="Ferro J.A."/>
            <person name="Reinach F.C."/>
            <person name="Farah C.S."/>
            <person name="Furlan L.R."/>
            <person name="Quaggio R.B."/>
            <person name="Monteiro-Vitorello C.B."/>
            <person name="Van Sluys M.A."/>
            <person name="Almeida N.F. Jr."/>
            <person name="Alves L.M.C."/>
            <person name="do Amaral A.M."/>
            <person name="Bertolini M.C."/>
            <person name="Camargo L.E.A."/>
            <person name="Camarotte G."/>
            <person name="Cannavan F."/>
            <person name="Cardozo J."/>
            <person name="Chambergo F."/>
            <person name="Ciapina L.P."/>
            <person name="Cicarelli R.M.B."/>
            <person name="Coutinho L.L."/>
            <person name="Cursino-Santos J.R."/>
            <person name="El-Dorry H."/>
            <person name="Faria J.B."/>
            <person name="Ferreira A.J.S."/>
            <person name="Ferreira R.C.C."/>
            <person name="Ferro M.I.T."/>
            <person name="Formighieri E.F."/>
            <person name="Franco M.C."/>
            <person name="Greggio C.C."/>
            <person name="Gruber A."/>
            <person name="Katsuyama A.M."/>
            <person name="Kishi L.T."/>
            <person name="Leite R.P."/>
            <person name="Lemos E.G.M."/>
            <person name="Lemos M.V.F."/>
            <person name="Locali E.C."/>
            <person name="Machado M.A."/>
            <person name="Madeira A.M.B.N."/>
            <person name="Martinez-Rossi N.M."/>
            <person name="Martins E.C."/>
            <person name="Meidanis J."/>
            <person name="Menck C.F.M."/>
            <person name="Miyaki C.Y."/>
            <person name="Moon D.H."/>
            <person name="Moreira L.M."/>
            <person name="Novo M.T.M."/>
            <person name="Okura V.K."/>
            <person name="Oliveira M.C."/>
            <person name="Oliveira V.R."/>
            <person name="Pereira H.A."/>
            <person name="Rossi A."/>
            <person name="Sena J.A.D."/>
            <person name="Silva C."/>
            <person name="de Souza R.F."/>
            <person name="Spinola L.A.F."/>
            <person name="Takita M.A."/>
            <person name="Tamura R.E."/>
            <person name="Teixeira E.C."/>
            <person name="Tezza R.I.D."/>
            <person name="Trindade dos Santos M."/>
            <person name="Truffi D."/>
            <person name="Tsai S.M."/>
            <person name="White F.F."/>
            <person name="Setubal J.C."/>
            <person name="Kitajima J.P."/>
        </authorList>
    </citation>
    <scope>NUCLEOTIDE SEQUENCE [LARGE SCALE GENOMIC DNA]</scope>
    <source>
        <strain>ATCC 33913 / DSM 3586 / NCPPB 528 / LMG 568 / P 25</strain>
    </source>
</reference>
<organism>
    <name type="scientific">Xanthomonas campestris pv. campestris (strain ATCC 33913 / DSM 3586 / NCPPB 528 / LMG 568 / P 25)</name>
    <dbReference type="NCBI Taxonomy" id="190485"/>
    <lineage>
        <taxon>Bacteria</taxon>
        <taxon>Pseudomonadati</taxon>
        <taxon>Pseudomonadota</taxon>
        <taxon>Gammaproteobacteria</taxon>
        <taxon>Lysobacterales</taxon>
        <taxon>Lysobacteraceae</taxon>
        <taxon>Xanthomonas</taxon>
    </lineage>
</organism>
<proteinExistence type="inferred from homology"/>
<keyword id="KW-0119">Carbohydrate metabolism</keyword>
<keyword id="KW-0378">Hydrolase</keyword>
<keyword id="KW-0460">Magnesium</keyword>
<keyword id="KW-0479">Metal-binding</keyword>
<keyword id="KW-1185">Reference proteome</keyword>
<sequence>MRFPRAVLFDLDGTLLDSAPDMLATVNAMLSERGLPCITLAQLRPVVSKGSRAMLAVAFAHLDAAAREALVPEFLKRYEALLGTQAQLFDGVEVMLQRLEQAGCVWGIVTNKPEYLAQLILPQLGWQQRCAVLIGGDTLAERKPHPLPLLVAADRIGVAATQCVYVGDDERDILAARAAGMPSVAALWGYRLGDDDPLSWQADVLVEQPPQLWEPAAWPQP</sequence>
<dbReference type="EC" id="3.1.3.18" evidence="1"/>
<dbReference type="EMBL" id="AE008922">
    <property type="protein sequence ID" value="AAM41547.1"/>
    <property type="molecule type" value="Genomic_DNA"/>
</dbReference>
<dbReference type="RefSeq" id="NP_637623.1">
    <property type="nucleotide sequence ID" value="NC_003902.1"/>
</dbReference>
<dbReference type="RefSeq" id="WP_011037412.1">
    <property type="nucleotide sequence ID" value="NC_003902.1"/>
</dbReference>
<dbReference type="SMR" id="Q8P8H3"/>
<dbReference type="STRING" id="190485.XCC2268"/>
<dbReference type="EnsemblBacteria" id="AAM41547">
    <property type="protein sequence ID" value="AAM41547"/>
    <property type="gene ID" value="XCC2268"/>
</dbReference>
<dbReference type="KEGG" id="xcc:XCC2268"/>
<dbReference type="PATRIC" id="fig|190485.4.peg.2418"/>
<dbReference type="eggNOG" id="COG0546">
    <property type="taxonomic scope" value="Bacteria"/>
</dbReference>
<dbReference type="HOGENOM" id="CLU_045011_19_1_6"/>
<dbReference type="OrthoDB" id="9776368at2"/>
<dbReference type="UniPathway" id="UPA00865">
    <property type="reaction ID" value="UER00834"/>
</dbReference>
<dbReference type="Proteomes" id="UP000001010">
    <property type="component" value="Chromosome"/>
</dbReference>
<dbReference type="GO" id="GO:0005829">
    <property type="term" value="C:cytosol"/>
    <property type="evidence" value="ECO:0000318"/>
    <property type="project" value="GO_Central"/>
</dbReference>
<dbReference type="GO" id="GO:0046872">
    <property type="term" value="F:metal ion binding"/>
    <property type="evidence" value="ECO:0007669"/>
    <property type="project" value="UniProtKB-KW"/>
</dbReference>
<dbReference type="GO" id="GO:0008967">
    <property type="term" value="F:phosphoglycolate phosphatase activity"/>
    <property type="evidence" value="ECO:0000318"/>
    <property type="project" value="GO_Central"/>
</dbReference>
<dbReference type="GO" id="GO:0005975">
    <property type="term" value="P:carbohydrate metabolic process"/>
    <property type="evidence" value="ECO:0007669"/>
    <property type="project" value="InterPro"/>
</dbReference>
<dbReference type="GO" id="GO:0006281">
    <property type="term" value="P:DNA repair"/>
    <property type="evidence" value="ECO:0000318"/>
    <property type="project" value="GO_Central"/>
</dbReference>
<dbReference type="GO" id="GO:0046295">
    <property type="term" value="P:glycolate biosynthetic process"/>
    <property type="evidence" value="ECO:0007669"/>
    <property type="project" value="UniProtKB-UniRule"/>
</dbReference>
<dbReference type="FunFam" id="3.40.50.1000:FF:000022">
    <property type="entry name" value="Phosphoglycolate phosphatase"/>
    <property type="match status" value="1"/>
</dbReference>
<dbReference type="Gene3D" id="3.40.50.1000">
    <property type="entry name" value="HAD superfamily/HAD-like"/>
    <property type="match status" value="1"/>
</dbReference>
<dbReference type="Gene3D" id="1.10.150.240">
    <property type="entry name" value="Putative phosphatase, domain 2"/>
    <property type="match status" value="1"/>
</dbReference>
<dbReference type="HAMAP" id="MF_00495">
    <property type="entry name" value="GPH_hydrolase_bact"/>
    <property type="match status" value="1"/>
</dbReference>
<dbReference type="InterPro" id="IPR050155">
    <property type="entry name" value="HAD-like_hydrolase_sf"/>
</dbReference>
<dbReference type="InterPro" id="IPR036412">
    <property type="entry name" value="HAD-like_sf"/>
</dbReference>
<dbReference type="InterPro" id="IPR006439">
    <property type="entry name" value="HAD-SF_hydro_IA"/>
</dbReference>
<dbReference type="InterPro" id="IPR041492">
    <property type="entry name" value="HAD_2"/>
</dbReference>
<dbReference type="InterPro" id="IPR023214">
    <property type="entry name" value="HAD_sf"/>
</dbReference>
<dbReference type="InterPro" id="IPR023198">
    <property type="entry name" value="PGP-like_dom2"/>
</dbReference>
<dbReference type="InterPro" id="IPR037512">
    <property type="entry name" value="PGPase_prok"/>
</dbReference>
<dbReference type="NCBIfam" id="TIGR01549">
    <property type="entry name" value="HAD-SF-IA-v1"/>
    <property type="match status" value="1"/>
</dbReference>
<dbReference type="NCBIfam" id="TIGR01509">
    <property type="entry name" value="HAD-SF-IA-v3"/>
    <property type="match status" value="1"/>
</dbReference>
<dbReference type="NCBIfam" id="TIGR01449">
    <property type="entry name" value="PGP_bact"/>
    <property type="match status" value="1"/>
</dbReference>
<dbReference type="NCBIfam" id="NF009700">
    <property type="entry name" value="PRK13226.1"/>
    <property type="match status" value="1"/>
</dbReference>
<dbReference type="PANTHER" id="PTHR43434">
    <property type="entry name" value="PHOSPHOGLYCOLATE PHOSPHATASE"/>
    <property type="match status" value="1"/>
</dbReference>
<dbReference type="PANTHER" id="PTHR43434:SF23">
    <property type="entry name" value="PHOSPHOGLYCOLATE PHOSPHATASE"/>
    <property type="match status" value="1"/>
</dbReference>
<dbReference type="Pfam" id="PF13419">
    <property type="entry name" value="HAD_2"/>
    <property type="match status" value="1"/>
</dbReference>
<dbReference type="PRINTS" id="PR00413">
    <property type="entry name" value="HADHALOGNASE"/>
</dbReference>
<dbReference type="SFLD" id="SFLDG01135">
    <property type="entry name" value="C1.5.6:_HAD__Beta-PGM__Phospha"/>
    <property type="match status" value="1"/>
</dbReference>
<dbReference type="SFLD" id="SFLDS00003">
    <property type="entry name" value="Haloacid_Dehalogenase"/>
    <property type="match status" value="1"/>
</dbReference>
<dbReference type="SUPFAM" id="SSF56784">
    <property type="entry name" value="HAD-like"/>
    <property type="match status" value="1"/>
</dbReference>
<feature type="chain" id="PRO_0000108047" description="Phosphoglycolate phosphatase">
    <location>
        <begin position="1"/>
        <end position="221"/>
    </location>
</feature>
<feature type="active site" description="Nucleophile" evidence="1">
    <location>
        <position position="10"/>
    </location>
</feature>
<feature type="binding site" evidence="1">
    <location>
        <position position="10"/>
    </location>
    <ligand>
        <name>Mg(2+)</name>
        <dbReference type="ChEBI" id="CHEBI:18420"/>
    </ligand>
</feature>
<feature type="binding site" evidence="1">
    <location>
        <position position="12"/>
    </location>
    <ligand>
        <name>Mg(2+)</name>
        <dbReference type="ChEBI" id="CHEBI:18420"/>
    </ligand>
</feature>
<feature type="binding site" evidence="1">
    <location>
        <position position="168"/>
    </location>
    <ligand>
        <name>Mg(2+)</name>
        <dbReference type="ChEBI" id="CHEBI:18420"/>
    </ligand>
</feature>
<comment type="function">
    <text evidence="1">Specifically catalyzes the dephosphorylation of 2-phosphoglycolate. Is involved in the dissimilation of the intracellular 2-phosphoglycolate formed during the DNA repair of 3'-phosphoglycolate ends, a major class of DNA lesions induced by oxidative stress.</text>
</comment>
<comment type="catalytic activity">
    <reaction evidence="1">
        <text>2-phosphoglycolate + H2O = glycolate + phosphate</text>
        <dbReference type="Rhea" id="RHEA:14369"/>
        <dbReference type="ChEBI" id="CHEBI:15377"/>
        <dbReference type="ChEBI" id="CHEBI:29805"/>
        <dbReference type="ChEBI" id="CHEBI:43474"/>
        <dbReference type="ChEBI" id="CHEBI:58033"/>
        <dbReference type="EC" id="3.1.3.18"/>
    </reaction>
</comment>
<comment type="cofactor">
    <cofactor evidence="1">
        <name>Mg(2+)</name>
        <dbReference type="ChEBI" id="CHEBI:18420"/>
    </cofactor>
</comment>
<comment type="pathway">
    <text evidence="1">Organic acid metabolism; glycolate biosynthesis; glycolate from 2-phosphoglycolate: step 1/1.</text>
</comment>
<comment type="similarity">
    <text evidence="1">Belongs to the HAD-like hydrolase superfamily. CbbY/CbbZ/Gph/YieH family.</text>
</comment>
<accession>Q8P8H3</accession>
<name>GPH_XANCP</name>
<evidence type="ECO:0000255" key="1">
    <source>
        <dbReference type="HAMAP-Rule" id="MF_00495"/>
    </source>
</evidence>
<protein>
    <recommendedName>
        <fullName evidence="1">Phosphoglycolate phosphatase</fullName>
        <shortName evidence="1">PGP</shortName>
        <shortName evidence="1">PGPase</shortName>
        <ecNumber evidence="1">3.1.3.18</ecNumber>
    </recommendedName>
</protein>